<proteinExistence type="evidence at protein level"/>
<protein>
    <recommendedName>
        <fullName>ATP-dependent DNA helicase Pif1</fullName>
        <ecNumber evidence="4">5.6.2.3</ecNumber>
    </recommendedName>
    <alternativeName>
        <fullName evidence="5">DNA 5'-3' helicase Pif1</fullName>
    </alternativeName>
</protein>
<dbReference type="EC" id="5.6.2.3" evidence="4"/>
<dbReference type="EMBL" id="CP000713">
    <property type="protein sequence ID" value="ABQ94501.1"/>
    <property type="molecule type" value="Genomic_DNA"/>
</dbReference>
<dbReference type="SMR" id="A5WFR0"/>
<dbReference type="STRING" id="349106.PsycPRwf_1560"/>
<dbReference type="KEGG" id="prw:PsycPRwf_1560"/>
<dbReference type="eggNOG" id="COG0507">
    <property type="taxonomic scope" value="Bacteria"/>
</dbReference>
<dbReference type="HOGENOM" id="CLU_001613_7_2_6"/>
<dbReference type="GO" id="GO:0005524">
    <property type="term" value="F:ATP binding"/>
    <property type="evidence" value="ECO:0007669"/>
    <property type="project" value="UniProtKB-KW"/>
</dbReference>
<dbReference type="GO" id="GO:0016887">
    <property type="term" value="F:ATP hydrolysis activity"/>
    <property type="evidence" value="ECO:0007669"/>
    <property type="project" value="InterPro"/>
</dbReference>
<dbReference type="GO" id="GO:0003677">
    <property type="term" value="F:DNA binding"/>
    <property type="evidence" value="ECO:0007669"/>
    <property type="project" value="UniProtKB-KW"/>
</dbReference>
<dbReference type="GO" id="GO:0003678">
    <property type="term" value="F:DNA helicase activity"/>
    <property type="evidence" value="ECO:0007669"/>
    <property type="project" value="InterPro"/>
</dbReference>
<dbReference type="GO" id="GO:0006310">
    <property type="term" value="P:DNA recombination"/>
    <property type="evidence" value="ECO:0007669"/>
    <property type="project" value="UniProtKB-KW"/>
</dbReference>
<dbReference type="GO" id="GO:0006281">
    <property type="term" value="P:DNA repair"/>
    <property type="evidence" value="ECO:0007669"/>
    <property type="project" value="UniProtKB-KW"/>
</dbReference>
<dbReference type="GO" id="GO:0000723">
    <property type="term" value="P:telomere maintenance"/>
    <property type="evidence" value="ECO:0007669"/>
    <property type="project" value="InterPro"/>
</dbReference>
<dbReference type="CDD" id="cd18037">
    <property type="entry name" value="DEXSc_Pif1_like"/>
    <property type="match status" value="1"/>
</dbReference>
<dbReference type="CDD" id="cd18809">
    <property type="entry name" value="SF1_C_RecD"/>
    <property type="match status" value="1"/>
</dbReference>
<dbReference type="Gene3D" id="3.40.50.300">
    <property type="entry name" value="P-loop containing nucleotide triphosphate hydrolases"/>
    <property type="match status" value="1"/>
</dbReference>
<dbReference type="InterPro" id="IPR003593">
    <property type="entry name" value="AAA+_ATPase"/>
</dbReference>
<dbReference type="InterPro" id="IPR010285">
    <property type="entry name" value="DNA_helicase_pif1-like_DEAD"/>
</dbReference>
<dbReference type="InterPro" id="IPR029491">
    <property type="entry name" value="Helicase_HTH"/>
</dbReference>
<dbReference type="InterPro" id="IPR027417">
    <property type="entry name" value="P-loop_NTPase"/>
</dbReference>
<dbReference type="InterPro" id="IPR051055">
    <property type="entry name" value="PIF1_helicase"/>
</dbReference>
<dbReference type="PANTHER" id="PTHR47642">
    <property type="entry name" value="ATP-DEPENDENT DNA HELICASE"/>
    <property type="match status" value="1"/>
</dbReference>
<dbReference type="PANTHER" id="PTHR47642:SF5">
    <property type="entry name" value="ATP-DEPENDENT DNA HELICASE"/>
    <property type="match status" value="1"/>
</dbReference>
<dbReference type="Pfam" id="PF14493">
    <property type="entry name" value="HTH_40"/>
    <property type="match status" value="1"/>
</dbReference>
<dbReference type="Pfam" id="PF05970">
    <property type="entry name" value="PIF1"/>
    <property type="match status" value="1"/>
</dbReference>
<dbReference type="SMART" id="SM00382">
    <property type="entry name" value="AAA"/>
    <property type="match status" value="1"/>
</dbReference>
<dbReference type="SUPFAM" id="SSF52540">
    <property type="entry name" value="P-loop containing nucleoside triphosphate hydrolases"/>
    <property type="match status" value="2"/>
</dbReference>
<name>PIF1_PSYWF</name>
<keyword id="KW-0067">ATP-binding</keyword>
<keyword id="KW-0227">DNA damage</keyword>
<keyword id="KW-0233">DNA recombination</keyword>
<keyword id="KW-0234">DNA repair</keyword>
<keyword id="KW-0238">DNA-binding</keyword>
<keyword id="KW-0347">Helicase</keyword>
<keyword id="KW-0378">Hydrolase</keyword>
<keyword id="KW-0413">Isomerase</keyword>
<keyword id="KW-0547">Nucleotide-binding</keyword>
<evidence type="ECO:0000250" key="1"/>
<evidence type="ECO:0000250" key="2">
    <source>
        <dbReference type="UniProtKB" id="P07271"/>
    </source>
</evidence>
<evidence type="ECO:0000250" key="3">
    <source>
        <dbReference type="UniProtKB" id="Q9H611"/>
    </source>
</evidence>
<evidence type="ECO:0000269" key="4">
    <source>
    </source>
</evidence>
<evidence type="ECO:0000305" key="5"/>
<gene>
    <name type="primary">pif1</name>
    <name type="ordered locus">PsycPRwf_1560</name>
</gene>
<feature type="chain" id="PRO_0000423712" description="ATP-dependent DNA helicase Pif1">
    <location>
        <begin position="1"/>
        <end position="659"/>
    </location>
</feature>
<accession>A5WFR0</accession>
<reference key="1">
    <citation type="submission" date="2007-05" db="EMBL/GenBank/DDBJ databases">
        <title>Complete sequence of chromosome of Psychrobacter sp. PRwf-1.</title>
        <authorList>
            <consortium name="US DOE Joint Genome Institute"/>
            <person name="Copeland A."/>
            <person name="Lucas S."/>
            <person name="Lapidus A."/>
            <person name="Barry K."/>
            <person name="Detter J.C."/>
            <person name="Glavina del Rio T."/>
            <person name="Hammon N."/>
            <person name="Israni S."/>
            <person name="Dalin E."/>
            <person name="Tice H."/>
            <person name="Pitluck S."/>
            <person name="Chain P."/>
            <person name="Malfatti S."/>
            <person name="Shin M."/>
            <person name="Vergez L."/>
            <person name="Schmutz J."/>
            <person name="Larimer F."/>
            <person name="Land M."/>
            <person name="Hauser L."/>
            <person name="Kyrpides N."/>
            <person name="Kim E."/>
            <person name="Tiedje J."/>
            <person name="Richardson P."/>
        </authorList>
    </citation>
    <scope>NUCLEOTIDE SEQUENCE [LARGE SCALE GENOMIC DNA]</scope>
    <source>
        <strain>PRwf-1</strain>
    </source>
</reference>
<reference key="2">
    <citation type="journal article" date="2013" name="Nature">
        <title>Pif1 family helicases suppress genome instability at G-quadruplex motifs.</title>
        <authorList>
            <person name="Paeschke K."/>
            <person name="Bochman M.L."/>
            <person name="Garcia P.D."/>
            <person name="Cejka P."/>
            <person name="Friedman K.L."/>
            <person name="Kowalczykowski S.C."/>
            <person name="Zakian V.A."/>
        </authorList>
    </citation>
    <scope>FUNCTION IN G4-UNWINDING</scope>
    <scope>CATALYTIC ACTIVITY</scope>
    <source>
        <strain>PRwf-1</strain>
    </source>
</reference>
<organism>
    <name type="scientific">Psychrobacter sp. (strain PRwf-1)</name>
    <dbReference type="NCBI Taxonomy" id="349106"/>
    <lineage>
        <taxon>Bacteria</taxon>
        <taxon>Pseudomonadati</taxon>
        <taxon>Pseudomonadota</taxon>
        <taxon>Gammaproteobacteria</taxon>
        <taxon>Moraxellales</taxon>
        <taxon>Moraxellaceae</taxon>
        <taxon>Psychrobacter</taxon>
    </lineage>
</organism>
<sequence length="659" mass="72807">MKQATALDILKTGKNVFLTGSAGSGKTYTLNEYIHYLRARRVPVATTASTGIAATHMNGITIHSWSGIGIKDELTERDLVNLSRKKVLKDRLQETAVLIIDEISMLHAKQLNLVNQVLKHMRQNDKPFGGIQVVVAGDFFQLPPVGSRGESNRDKFAFMSQAWLDAGFKICYLSEQHRQQSGEGEDAQITLDNILNQIRGENGVSAAAIAALQNTFYQDVDVNRTRLYTHNVNVNKINEHELALLEGETVTYNAIAHGDNKLVETLKKSVRTSDELTLKTGAKVMFIKNNSELGVSNGTMGELIGFTTIKPLKLSIATIDDGSADEDGSAEALDEALETLEDAEALAQNESDKPLVSTDRYPIVRLNSGRQVIAEGEEWIVEDESGEILASYTQIPLTLAWAITIHKSQGMTLDAAEIDLSKTFELGQGYVALSRLKSLEGLKLLGMNDLSLRLDPLARGADSRFKDLSLEAQQAFEDIEREVLQESHERFVIASGGTLNKANIAAFEKEYKNRKKKQAQKLAQKDKLSNQLSDHSESTLMATRILLEESLSIAEIAQSRGLAQSTIMGHVARLRRQDPSLNCEHLRPDEAILNKVSKAVDAIIAAGDPNDFNAADDSTQSVKGGDDFDKQRIKLRPIYEYLKQQIDYNTIRLALVFID</sequence>
<comment type="function">
    <text evidence="4">DNA-dependent ATPase and 5'-3' DNA helicase that efficiently unwinds G-quadruplex (G4) DNA structures. May be involved in resolving commom issues that arise during DNA replication, recombination, and repair.</text>
</comment>
<comment type="catalytic activity">
    <reaction evidence="4">
        <text>Couples ATP hydrolysis with the unwinding of duplex DNA at the replication fork by translocating in the 5'-3' direction. This creates two antiparallel DNA single strands (ssDNA). The leading ssDNA polymer is the template for DNA polymerase III holoenzyme which synthesizes a continuous strand.</text>
        <dbReference type="EC" id="5.6.2.3"/>
    </reaction>
</comment>
<comment type="catalytic activity">
    <reaction evidence="4">
        <text>ATP + H2O = ADP + phosphate + H(+)</text>
        <dbReference type="Rhea" id="RHEA:13065"/>
        <dbReference type="ChEBI" id="CHEBI:15377"/>
        <dbReference type="ChEBI" id="CHEBI:15378"/>
        <dbReference type="ChEBI" id="CHEBI:30616"/>
        <dbReference type="ChEBI" id="CHEBI:43474"/>
        <dbReference type="ChEBI" id="CHEBI:456216"/>
        <dbReference type="EC" id="5.6.2.3"/>
    </reaction>
</comment>
<comment type="cofactor">
    <cofactor evidence="2">
        <name>Mg(2+)</name>
        <dbReference type="ChEBI" id="CHEBI:18420"/>
    </cofactor>
</comment>
<comment type="subunit">
    <text evidence="1 3">Monomer.</text>
</comment>
<comment type="similarity">
    <text evidence="5">Belongs to the helicase family. PIF1 subfamily.</text>
</comment>